<keyword id="KW-0002">3D-structure</keyword>
<keyword id="KW-0521">NADP</keyword>
<keyword id="KW-0560">Oxidoreductase</keyword>
<keyword id="KW-1185">Reference proteome</keyword>
<proteinExistence type="evidence at protein level"/>
<dbReference type="EC" id="1.1.1.-" evidence="3 2 10"/>
<dbReference type="EC" id="1.1.1.2" evidence="2 3 6"/>
<dbReference type="EMBL" id="U28377">
    <property type="protein sequence ID" value="AAA69168.1"/>
    <property type="molecule type" value="Genomic_DNA"/>
</dbReference>
<dbReference type="EMBL" id="U00096">
    <property type="protein sequence ID" value="AAC76037.1"/>
    <property type="molecule type" value="Genomic_DNA"/>
</dbReference>
<dbReference type="EMBL" id="AP009048">
    <property type="protein sequence ID" value="BAE77060.1"/>
    <property type="molecule type" value="Genomic_DNA"/>
</dbReference>
<dbReference type="PIR" id="G65086">
    <property type="entry name" value="G65086"/>
</dbReference>
<dbReference type="RefSeq" id="NP_417474.1">
    <property type="nucleotide sequence ID" value="NC_000913.3"/>
</dbReference>
<dbReference type="RefSeq" id="WP_000262172.1">
    <property type="nucleotide sequence ID" value="NZ_SSZK01000023.1"/>
</dbReference>
<dbReference type="PDB" id="3N6Q">
    <property type="method" value="X-ray"/>
    <property type="resolution" value="1.80 A"/>
    <property type="chains" value="A/B/C/D/E/F/G/H=1-346"/>
</dbReference>
<dbReference type="PDB" id="4AST">
    <property type="method" value="X-ray"/>
    <property type="resolution" value="2.38 A"/>
    <property type="chains" value="A/B/C/D/E/F/G/H=1-346"/>
</dbReference>
<dbReference type="PDB" id="4AUB">
    <property type="method" value="X-ray"/>
    <property type="resolution" value="2.05 A"/>
    <property type="chains" value="A/B/C/D/E/F/G/H=1-346"/>
</dbReference>
<dbReference type="PDBsum" id="3N6Q"/>
<dbReference type="PDBsum" id="4AST"/>
<dbReference type="PDBsum" id="4AUB"/>
<dbReference type="SMR" id="Q46851"/>
<dbReference type="BioGRID" id="4261416">
    <property type="interactions" value="14"/>
</dbReference>
<dbReference type="BioGRID" id="851798">
    <property type="interactions" value="2"/>
</dbReference>
<dbReference type="DIP" id="DIP-36026N"/>
<dbReference type="FunCoup" id="Q46851">
    <property type="interactions" value="541"/>
</dbReference>
<dbReference type="IntAct" id="Q46851">
    <property type="interactions" value="6"/>
</dbReference>
<dbReference type="STRING" id="511145.b3001"/>
<dbReference type="jPOST" id="Q46851"/>
<dbReference type="PaxDb" id="511145-b3001"/>
<dbReference type="EnsemblBacteria" id="AAC76037">
    <property type="protein sequence ID" value="AAC76037"/>
    <property type="gene ID" value="b3001"/>
</dbReference>
<dbReference type="GeneID" id="947480"/>
<dbReference type="KEGG" id="ecj:JW2970"/>
<dbReference type="KEGG" id="eco:b3001"/>
<dbReference type="KEGG" id="ecoc:C3026_16410"/>
<dbReference type="PATRIC" id="fig|1411691.4.peg.3727"/>
<dbReference type="EchoBASE" id="EB2831"/>
<dbReference type="eggNOG" id="COG0667">
    <property type="taxonomic scope" value="Bacteria"/>
</dbReference>
<dbReference type="HOGENOM" id="CLU_023205_2_0_6"/>
<dbReference type="InParanoid" id="Q46851"/>
<dbReference type="OMA" id="MWAGPYG"/>
<dbReference type="OrthoDB" id="9772407at2"/>
<dbReference type="PhylomeDB" id="Q46851"/>
<dbReference type="BioCyc" id="EcoCyc:G7558-MONOMER"/>
<dbReference type="BioCyc" id="MetaCyc:G7558-MONOMER"/>
<dbReference type="SABIO-RK" id="Q46851"/>
<dbReference type="EvolutionaryTrace" id="Q46851"/>
<dbReference type="PRO" id="PR:Q46851"/>
<dbReference type="Proteomes" id="UP000000625">
    <property type="component" value="Chromosome"/>
</dbReference>
<dbReference type="GO" id="GO:0016616">
    <property type="term" value="F:oxidoreductase activity, acting on the CH-OH group of donors, NAD or NADP as acceptor"/>
    <property type="evidence" value="ECO:0000314"/>
    <property type="project" value="EcoCyc"/>
</dbReference>
<dbReference type="GO" id="GO:0006974">
    <property type="term" value="P:DNA damage response"/>
    <property type="evidence" value="ECO:0000270"/>
    <property type="project" value="EcoliWiki"/>
</dbReference>
<dbReference type="GO" id="GO:0051596">
    <property type="term" value="P:methylglyoxal catabolic process"/>
    <property type="evidence" value="ECO:0000315"/>
    <property type="project" value="EcoCyc"/>
</dbReference>
<dbReference type="CDD" id="cd19150">
    <property type="entry name" value="AKR_AKR14A1"/>
    <property type="match status" value="1"/>
</dbReference>
<dbReference type="FunFam" id="3.20.20.100:FF:000020">
    <property type="entry name" value="L-glyceraldehyde 3-phosphate reductase"/>
    <property type="match status" value="1"/>
</dbReference>
<dbReference type="Gene3D" id="3.20.20.100">
    <property type="entry name" value="NADP-dependent oxidoreductase domain"/>
    <property type="match status" value="1"/>
</dbReference>
<dbReference type="InterPro" id="IPR047628">
    <property type="entry name" value="GAP_reductase"/>
</dbReference>
<dbReference type="InterPro" id="IPR005399">
    <property type="entry name" value="K_chnl_volt-dep_bsu_KCNAB-rel"/>
</dbReference>
<dbReference type="InterPro" id="IPR023210">
    <property type="entry name" value="NADP_OxRdtase_dom"/>
</dbReference>
<dbReference type="InterPro" id="IPR036812">
    <property type="entry name" value="NADP_OxRdtase_dom_sf"/>
</dbReference>
<dbReference type="NCBIfam" id="NF007388">
    <property type="entry name" value="PRK09912.1"/>
    <property type="match status" value="1"/>
</dbReference>
<dbReference type="PANTHER" id="PTHR43150">
    <property type="entry name" value="HYPERKINETIC, ISOFORM M"/>
    <property type="match status" value="1"/>
</dbReference>
<dbReference type="PANTHER" id="PTHR43150:SF4">
    <property type="entry name" value="L-GLYCERALDEHYDE 3-PHOSPHATE REDUCTASE"/>
    <property type="match status" value="1"/>
</dbReference>
<dbReference type="Pfam" id="PF00248">
    <property type="entry name" value="Aldo_ket_red"/>
    <property type="match status" value="1"/>
</dbReference>
<dbReference type="SUPFAM" id="SSF51430">
    <property type="entry name" value="NAD(P)-linked oxidoreductase"/>
    <property type="match status" value="1"/>
</dbReference>
<sequence>MVWLANPERYGQMQYRYCGKSGLRLPALSLGLWHNFGHVNALESQRAILRKAFDLGITHFDLANNYGPPPGSAEENFGRLLREDFAAYRDELIISTKAGYDMWPGPYGSGGSRKYLLASLDQSLKRMGLEYVDIFYSHRVDENTPMEETASALAHAVQSGKALYVGISSYSPERTQKMVELLREWKIPLLIHQPSYNLLNRWVDKSGLLDTLQNNGVGCIAFTPLAQGLLTGKYLNGIPQDSRMHREGNKVRGLTPKMLTEANLNSLRLLNEMAQQRGQSMAQMALSWLLKDDRVTSVLIGASRAEQLEENVQALNNLTFSTKELAQIDQHIADGELNLWQASSDK</sequence>
<feature type="chain" id="PRO_0000201331" description="L-glyceraldehyde 3-phosphate reductase">
    <location>
        <begin position="1"/>
        <end position="346"/>
    </location>
</feature>
<feature type="binding site" evidence="5 15">
    <location>
        <position position="33"/>
    </location>
    <ligand>
        <name>NADP(+)</name>
        <dbReference type="ChEBI" id="CHEBI:58349"/>
    </ligand>
</feature>
<feature type="binding site" evidence="5 15">
    <location>
        <position position="61"/>
    </location>
    <ligand>
        <name>NADP(+)</name>
        <dbReference type="ChEBI" id="CHEBI:58349"/>
    </ligand>
</feature>
<feature type="binding site" evidence="5 15">
    <location>
        <position position="66"/>
    </location>
    <ligand>
        <name>NADP(+)</name>
        <dbReference type="ChEBI" id="CHEBI:58349"/>
    </ligand>
</feature>
<feature type="binding site" evidence="5 15">
    <location>
        <position position="168"/>
    </location>
    <ligand>
        <name>NADP(+)</name>
        <dbReference type="ChEBI" id="CHEBI:58349"/>
    </ligand>
</feature>
<feature type="binding site" evidence="5 15">
    <location>
        <position position="193"/>
    </location>
    <ligand>
        <name>NADP(+)</name>
        <dbReference type="ChEBI" id="CHEBI:58349"/>
    </ligand>
</feature>
<feature type="binding site" evidence="5 15">
    <location>
        <position position="223"/>
    </location>
    <ligand>
        <name>NADP(+)</name>
        <dbReference type="ChEBI" id="CHEBI:58349"/>
    </ligand>
</feature>
<feature type="binding site" evidence="5 15">
    <location>
        <position position="225"/>
    </location>
    <ligand>
        <name>NADP(+)</name>
        <dbReference type="ChEBI" id="CHEBI:58349"/>
    </ligand>
</feature>
<feature type="binding site" evidence="5 15">
    <location>
        <position position="227"/>
    </location>
    <ligand>
        <name>NADP(+)</name>
        <dbReference type="ChEBI" id="CHEBI:58349"/>
    </ligand>
</feature>
<feature type="binding site" evidence="5 15">
    <location>
        <position position="233"/>
    </location>
    <ligand>
        <name>NADP(+)</name>
        <dbReference type="ChEBI" id="CHEBI:58349"/>
    </ligand>
</feature>
<feature type="binding site" evidence="5 15">
    <location>
        <position position="303"/>
    </location>
    <ligand>
        <name>NADP(+)</name>
        <dbReference type="ChEBI" id="CHEBI:58349"/>
    </ligand>
</feature>
<feature type="binding site" evidence="5 15">
    <location>
        <position position="307"/>
    </location>
    <ligand>
        <name>NADP(+)</name>
        <dbReference type="ChEBI" id="CHEBI:58349"/>
    </ligand>
</feature>
<feature type="binding site" evidence="5 15">
    <location>
        <position position="311"/>
    </location>
    <ligand>
        <name>NADP(+)</name>
        <dbReference type="ChEBI" id="CHEBI:58349"/>
    </ligand>
</feature>
<feature type="site" description="Important for catalysis" evidence="11">
    <location>
        <position position="61"/>
    </location>
</feature>
<feature type="site" description="Important for catalysis" evidence="11">
    <location>
        <position position="66"/>
    </location>
</feature>
<feature type="site" description="Important for catalysis" evidence="11">
    <location>
        <position position="97"/>
    </location>
</feature>
<feature type="site" description="Important for catalysis" evidence="11">
    <location>
        <position position="138"/>
    </location>
</feature>
<feature type="turn" evidence="16">
    <location>
        <begin position="7"/>
        <end position="10"/>
    </location>
</feature>
<feature type="strand" evidence="16">
    <location>
        <begin position="15"/>
        <end position="17"/>
    </location>
</feature>
<feature type="strand" evidence="16">
    <location>
        <begin position="24"/>
        <end position="31"/>
    </location>
</feature>
<feature type="strand" evidence="16">
    <location>
        <begin position="33"/>
        <end position="35"/>
    </location>
</feature>
<feature type="helix" evidence="16">
    <location>
        <begin position="42"/>
        <end position="54"/>
    </location>
</feature>
<feature type="strand" evidence="16">
    <location>
        <begin position="59"/>
        <end position="61"/>
    </location>
</feature>
<feature type="turn" evidence="16">
    <location>
        <begin position="67"/>
        <end position="71"/>
    </location>
</feature>
<feature type="helix" evidence="16">
    <location>
        <begin position="72"/>
        <end position="84"/>
    </location>
</feature>
<feature type="turn" evidence="16">
    <location>
        <begin position="86"/>
        <end position="88"/>
    </location>
</feature>
<feature type="helix" evidence="16">
    <location>
        <begin position="89"/>
        <end position="91"/>
    </location>
</feature>
<feature type="strand" evidence="16">
    <location>
        <begin position="93"/>
        <end position="98"/>
    </location>
</feature>
<feature type="strand" evidence="16">
    <location>
        <begin position="103"/>
        <end position="105"/>
    </location>
</feature>
<feature type="strand" evidence="16">
    <location>
        <begin position="108"/>
        <end position="111"/>
    </location>
</feature>
<feature type="helix" evidence="16">
    <location>
        <begin position="113"/>
        <end position="127"/>
    </location>
</feature>
<feature type="strand" evidence="16">
    <location>
        <begin position="132"/>
        <end position="137"/>
    </location>
</feature>
<feature type="helix" evidence="16">
    <location>
        <begin position="146"/>
        <end position="158"/>
    </location>
</feature>
<feature type="strand" evidence="16">
    <location>
        <begin position="161"/>
        <end position="169"/>
    </location>
</feature>
<feature type="helix" evidence="16">
    <location>
        <begin position="172"/>
        <end position="183"/>
    </location>
</feature>
<feature type="turn" evidence="16">
    <location>
        <begin position="184"/>
        <end position="186"/>
    </location>
</feature>
<feature type="strand" evidence="16">
    <location>
        <begin position="191"/>
        <end position="193"/>
    </location>
</feature>
<feature type="helix" evidence="16">
    <location>
        <begin position="202"/>
        <end position="205"/>
    </location>
</feature>
<feature type="helix" evidence="16">
    <location>
        <begin position="208"/>
        <end position="215"/>
    </location>
</feature>
<feature type="strand" evidence="16">
    <location>
        <begin position="218"/>
        <end position="223"/>
    </location>
</feature>
<feature type="helix" evidence="16">
    <location>
        <begin position="226"/>
        <end position="231"/>
    </location>
</feature>
<feature type="strand" evidence="17">
    <location>
        <begin position="240"/>
        <end position="242"/>
    </location>
</feature>
<feature type="turn" evidence="17">
    <location>
        <begin position="243"/>
        <end position="245"/>
    </location>
</feature>
<feature type="helix" evidence="16">
    <location>
        <begin position="261"/>
        <end position="276"/>
    </location>
</feature>
<feature type="helix" evidence="16">
    <location>
        <begin position="281"/>
        <end position="289"/>
    </location>
</feature>
<feature type="strand" evidence="16">
    <location>
        <begin position="296"/>
        <end position="300"/>
    </location>
</feature>
<feature type="helix" evidence="16">
    <location>
        <begin position="305"/>
        <end position="312"/>
    </location>
</feature>
<feature type="helix" evidence="16">
    <location>
        <begin position="313"/>
        <end position="316"/>
    </location>
</feature>
<feature type="helix" evidence="16">
    <location>
        <begin position="322"/>
        <end position="334"/>
    </location>
</feature>
<feature type="helix" evidence="17">
    <location>
        <begin position="341"/>
        <end position="344"/>
    </location>
</feature>
<name>GPR_ECOLI</name>
<comment type="function">
    <text evidence="1 2 3 6">Aldo-keto reductase that catalyzes the stereospecific, NADPH-dependent reduction of L-glyceraldehyde 3-phosphate (L-GAP) to L-glycerol 3-phosphate (L-G3P) (PubMed:18620424). The physiological role of Gpr is the detoxification of L-GAP, which may be formed via non-enzymatic and/or enzymatic racemization of D-GAP (PubMed:18620424). Also contributes to cellular methylglyoxal detoxification by catalyzing the NADPH-dependent conversion of methylglyoxal to acetol (PubMed:12583903, PubMed:16077126). However, the catalytic efficiency of methylglyoxal reductase activity is more than 2 orders of magnitude lower than the L-GAP reductase activity (PubMed:18620424). In addition, exhibits activity with glyoxal and probably plays a significant role in detoxification of glyoxal in vivo (PubMed:23990306). Shows broad specificity and can use aromatic aldehydes such as 4-nitrobenzaldehyde and benzaldehyde, D,L-glyceraldehyde, phenylglyoxal, isatin and the model substrate 4-nitrobenzaldehyde (PubMed:12583903, PubMed:16077126).</text>
</comment>
<comment type="catalytic activity">
    <reaction evidence="2 3 6">
        <text>a primary alcohol + NADP(+) = an aldehyde + NADPH + H(+)</text>
        <dbReference type="Rhea" id="RHEA:15937"/>
        <dbReference type="ChEBI" id="CHEBI:15378"/>
        <dbReference type="ChEBI" id="CHEBI:15734"/>
        <dbReference type="ChEBI" id="CHEBI:17478"/>
        <dbReference type="ChEBI" id="CHEBI:57783"/>
        <dbReference type="ChEBI" id="CHEBI:58349"/>
        <dbReference type="EC" id="1.1.1.2"/>
    </reaction>
</comment>
<comment type="catalytic activity">
    <reaction evidence="2 10">
        <text>hydroxyacetone + NADP(+) = methylglyoxal + NADPH + H(+)</text>
        <dbReference type="Rhea" id="RHEA:27986"/>
        <dbReference type="ChEBI" id="CHEBI:15378"/>
        <dbReference type="ChEBI" id="CHEBI:17158"/>
        <dbReference type="ChEBI" id="CHEBI:27957"/>
        <dbReference type="ChEBI" id="CHEBI:57783"/>
        <dbReference type="ChEBI" id="CHEBI:58349"/>
    </reaction>
</comment>
<comment type="biophysicochemical properties">
    <kinetics>
        <KM evidence="3">53 uM for L-glyceraldehyde 3-phosphate</KM>
        <KM evidence="1">3.24 mM for methylglyoxal (at pH 7 and at 25 degrees Celsius)</KM>
        <KM evidence="2">6.91 mM for methylglyoxal</KM>
        <KM evidence="1">1.06 mM for 4-nitrobenzaldehyde (at pH 7 and at 25 degrees Celsius)</KM>
        <KM evidence="1">2.05 mM for isatin (at pH 7 and at 25 degrees Celsius)</KM>
        <KM evidence="6">104 mM for glyoxal</KM>
        <KM evidence="6">104 mM for glycolaldehyde</KM>
        <KM evidence="3">30 uM for NADPH</KM>
        <text evidence="1 2 3 6">kcat is 22 sec(-1) with L-glyceraldehyde 3-phosphate as substrate (PubMed:18620424). kcat is 151 min(-1) with methylglyoxal as substrate (PubMed:12583903). kcat is 661 min(-1) with methylglyoxal as substrate (PubMed:16077126). kcat is 124 min(-1) with 4-nitrobenzaldehyde as substrate (PubMed:12583903). kcat is 109 min(-1) with isatin as substrate (PubMed:12583903). kcat is 458 min(-1) with glyoxal as substrate (PubMed:23990306). kcat is 140 min(-1) with glycolaldehyde as substrate (PubMed:23990306).</text>
    </kinetics>
</comment>
<comment type="subunit">
    <text evidence="4 5">Homotetramer (PubMed:22393408). Homooctamer (PubMed:23103600).</text>
</comment>
<comment type="induction">
    <text evidence="2 6">Expression is not significantly altered upon methylglyoxal addition (PubMed:16077126). Expression is decreased in dose-dependent manner with glyoxal treatment (PubMed:23990306).</text>
</comment>
<comment type="disruption phenotype">
    <text evidence="2 6">Cells lacking this gene show 23% decrease in the amount of acetol (PubMed:16077126). The deletion mutant shows sensitivity to glyoxal (PubMed:23990306).</text>
</comment>
<comment type="similarity">
    <text evidence="9">Belongs to the shaker potassium channel beta subunit family.</text>
</comment>
<protein>
    <recommendedName>
        <fullName evidence="8">L-glyceraldehyde 3-phosphate reductase</fullName>
        <shortName evidence="8">L-GAP reductase</shortName>
        <ecNumber evidence="3">1.1.1.-</ecNumber>
    </recommendedName>
    <alternativeName>
        <fullName evidence="7">AKR14A1</fullName>
    </alternativeName>
    <alternativeName>
        <fullName evidence="9">Aldo-keto reductase YqhE</fullName>
        <ecNumber evidence="2 3 6">1.1.1.2</ecNumber>
    </alternativeName>
    <alternativeName>
        <fullName evidence="9">Methylglyoxal reductase Gpr</fullName>
        <ecNumber evidence="2 10">1.1.1.-</ecNumber>
    </alternativeName>
</protein>
<evidence type="ECO:0000269" key="1">
    <source>
    </source>
</evidence>
<evidence type="ECO:0000269" key="2">
    <source>
    </source>
</evidence>
<evidence type="ECO:0000269" key="3">
    <source>
    </source>
</evidence>
<evidence type="ECO:0000269" key="4">
    <source>
    </source>
</evidence>
<evidence type="ECO:0000269" key="5">
    <source>
    </source>
</evidence>
<evidence type="ECO:0000269" key="6">
    <source>
    </source>
</evidence>
<evidence type="ECO:0000303" key="7">
    <source>
    </source>
</evidence>
<evidence type="ECO:0000303" key="8">
    <source>
    </source>
</evidence>
<evidence type="ECO:0000305" key="9"/>
<evidence type="ECO:0000305" key="10">
    <source>
    </source>
</evidence>
<evidence type="ECO:0000305" key="11">
    <source>
    </source>
</evidence>
<evidence type="ECO:0000312" key="12">
    <source>
        <dbReference type="EMBL" id="AAC76037.1"/>
    </source>
</evidence>
<evidence type="ECO:0007744" key="13">
    <source>
        <dbReference type="PDB" id="3N6Q"/>
    </source>
</evidence>
<evidence type="ECO:0007744" key="14">
    <source>
        <dbReference type="PDB" id="4AST"/>
    </source>
</evidence>
<evidence type="ECO:0007744" key="15">
    <source>
        <dbReference type="PDB" id="4AUB"/>
    </source>
</evidence>
<evidence type="ECO:0007829" key="16">
    <source>
        <dbReference type="PDB" id="3N6Q"/>
    </source>
</evidence>
<evidence type="ECO:0007829" key="17">
    <source>
        <dbReference type="PDB" id="4AUB"/>
    </source>
</evidence>
<gene>
    <name evidence="12" type="primary">gpr</name>
    <name type="synonym">mgrA</name>
    <name type="synonym">yghZ</name>
    <name type="ordered locus">b3001</name>
    <name type="ordered locus">JW2970</name>
</gene>
<reference key="1">
    <citation type="journal article" date="1997" name="Science">
        <title>The complete genome sequence of Escherichia coli K-12.</title>
        <authorList>
            <person name="Blattner F.R."/>
            <person name="Plunkett G. III"/>
            <person name="Bloch C.A."/>
            <person name="Perna N.T."/>
            <person name="Burland V."/>
            <person name="Riley M."/>
            <person name="Collado-Vides J."/>
            <person name="Glasner J.D."/>
            <person name="Rode C.K."/>
            <person name="Mayhew G.F."/>
            <person name="Gregor J."/>
            <person name="Davis N.W."/>
            <person name="Kirkpatrick H.A."/>
            <person name="Goeden M.A."/>
            <person name="Rose D.J."/>
            <person name="Mau B."/>
            <person name="Shao Y."/>
        </authorList>
    </citation>
    <scope>NUCLEOTIDE SEQUENCE [LARGE SCALE GENOMIC DNA]</scope>
    <source>
        <strain>K12 / MG1655 / ATCC 47076</strain>
    </source>
</reference>
<reference key="2">
    <citation type="journal article" date="2006" name="Mol. Syst. Biol.">
        <title>Highly accurate genome sequences of Escherichia coli K-12 strains MG1655 and W3110.</title>
        <authorList>
            <person name="Hayashi K."/>
            <person name="Morooka N."/>
            <person name="Yamamoto Y."/>
            <person name="Fujita K."/>
            <person name="Isono K."/>
            <person name="Choi S."/>
            <person name="Ohtsubo E."/>
            <person name="Baba T."/>
            <person name="Wanner B.L."/>
            <person name="Mori H."/>
            <person name="Horiuchi T."/>
        </authorList>
    </citation>
    <scope>NUCLEOTIDE SEQUENCE [LARGE SCALE GENOMIC DNA]</scope>
    <source>
        <strain>K12 / W3110 / ATCC 27325 / DSM 5911</strain>
    </source>
</reference>
<reference key="3">
    <citation type="journal article" date="2003" name="FEMS Microbiol. Lett.">
        <title>A novel aldo-keto reductase from Escherichia coli can increase resistance to methylglyoxal toxicity.</title>
        <authorList>
            <person name="Grant A.W."/>
            <person name="Steel G."/>
            <person name="Waugh H."/>
            <person name="Ellis E.M."/>
        </authorList>
    </citation>
    <scope>FUNCTION IN THE METHYLGLYOXAL DETOXIFICATION AND AS A REDUCTASE</scope>
    <scope>BIOPHYSICOCHEMICAL PROPERTIES</scope>
    <source>
        <strain>1400</strain>
    </source>
</reference>
<reference key="4">
    <citation type="journal article" date="2005" name="J. Bacteriol.">
        <title>Conversion of methylglyoxal to acetol by Escherichia coli aldo-keto reductases.</title>
        <authorList>
            <person name="Ko J."/>
            <person name="Kim I."/>
            <person name="Yoo S."/>
            <person name="Min B."/>
            <person name="Kim K."/>
            <person name="Park C."/>
        </authorList>
    </citation>
    <scope>FUNCTION</scope>
    <scope>CATALYTIC ACTIVITY</scope>
    <scope>BIOPHYSICOCHEMICAL PROPERTIES</scope>
    <scope>INDUCTION</scope>
    <scope>DISRUPTION PHENOTYPE</scope>
    <source>
        <strain>K12 / MG1655 / ATCC 47076</strain>
    </source>
</reference>
<reference key="5">
    <citation type="journal article" date="2008" name="Biochemistry">
        <title>A metabolic bypass of the triosephosphate isomerase reaction.</title>
        <authorList>
            <person name="Desai K.K."/>
            <person name="Miller B.G."/>
        </authorList>
    </citation>
    <scope>FUNCTION AS A GLYCERALDEHYDE 3-PHOSPHATE REDUCTASE</scope>
    <scope>CATALYTIC ACTIVITY</scope>
    <scope>BIOPHYSICOCHEMICAL PROPERTIES</scope>
</reference>
<reference key="6">
    <citation type="journal article" date="2013" name="J. Microbiol.">
        <title>Glyoxal detoxification in Escherichia coli K-12 by NADPH dependent aldo-keto reductases.</title>
        <authorList>
            <person name="Lee C."/>
            <person name="Kim I."/>
            <person name="Park C."/>
        </authorList>
    </citation>
    <scope>FUNCTION</scope>
    <scope>CATALYTIC ACTIVITY</scope>
    <scope>BIOPHYSICOCHEMICAL PROPERTIES</scope>
    <scope>INDUCTION</scope>
    <scope>DISRUPTION PHENOTYPE</scope>
</reference>
<reference evidence="13" key="7">
    <citation type="journal article" date="2012" name="PLoS ONE">
        <title>Macro-to-micro structural proteomics: native source proteins for high-throughput crystallization.</title>
        <authorList>
            <person name="Totir M."/>
            <person name="Echols N."/>
            <person name="Nanao M."/>
            <person name="Gee C.L."/>
            <person name="Moskaleva A."/>
            <person name="Gradia S."/>
            <person name="Iavarone A.T."/>
            <person name="Berger J.M."/>
            <person name="May A.P."/>
            <person name="Zubieta C."/>
            <person name="Alber T."/>
        </authorList>
    </citation>
    <scope>X-RAY CRYSTALLOGRAPHY (1.8 ANGSTROMS)</scope>
    <scope>SUBUNIT</scope>
</reference>
<reference evidence="14 15" key="8">
    <citation type="journal article" date="2013" name="Chem. Biol. Interact.">
        <title>The diversity of microbial aldo/keto reductases from Escherichia coli K12.</title>
        <authorList>
            <person name="Lapthorn A.J."/>
            <person name="Zhu X."/>
            <person name="Ellis E.M."/>
        </authorList>
    </citation>
    <scope>X-RAY CRYSTALLOGRAPHY (2.05 ANGSTROMS) IN COMPLEX WITH NADP(+)</scope>
    <scope>SUBUNIT</scope>
</reference>
<accession>Q46851</accession>
<accession>Q2M9J6</accession>
<organism>
    <name type="scientific">Escherichia coli (strain K12)</name>
    <dbReference type="NCBI Taxonomy" id="83333"/>
    <lineage>
        <taxon>Bacteria</taxon>
        <taxon>Pseudomonadati</taxon>
        <taxon>Pseudomonadota</taxon>
        <taxon>Gammaproteobacteria</taxon>
        <taxon>Enterobacterales</taxon>
        <taxon>Enterobacteriaceae</taxon>
        <taxon>Escherichia</taxon>
    </lineage>
</organism>